<evidence type="ECO:0000255" key="1">
    <source>
        <dbReference type="HAMAP-Rule" id="MF_01367"/>
    </source>
</evidence>
<evidence type="ECO:0000305" key="2"/>
<organism>
    <name type="scientific">Corynebacterium aurimucosum (strain ATCC 700975 / DSM 44827 / CIP 107346 / CN-1)</name>
    <name type="common">Corynebacterium nigricans</name>
    <dbReference type="NCBI Taxonomy" id="548476"/>
    <lineage>
        <taxon>Bacteria</taxon>
        <taxon>Bacillati</taxon>
        <taxon>Actinomycetota</taxon>
        <taxon>Actinomycetes</taxon>
        <taxon>Mycobacteriales</taxon>
        <taxon>Corynebacteriaceae</taxon>
        <taxon>Corynebacterium</taxon>
    </lineage>
</organism>
<keyword id="KW-1185">Reference proteome</keyword>
<keyword id="KW-0687">Ribonucleoprotein</keyword>
<keyword id="KW-0689">Ribosomal protein</keyword>
<keyword id="KW-0694">RNA-binding</keyword>
<keyword id="KW-0699">rRNA-binding</keyword>
<proteinExistence type="inferred from homology"/>
<dbReference type="EMBL" id="CP001601">
    <property type="protein sequence ID" value="ACP32021.1"/>
    <property type="molecule type" value="Genomic_DNA"/>
</dbReference>
<dbReference type="RefSeq" id="WP_010189586.1">
    <property type="nucleotide sequence ID" value="NC_012590.1"/>
</dbReference>
<dbReference type="SMR" id="C3PL17"/>
<dbReference type="STRING" id="548476.cauri_0422"/>
<dbReference type="GeneID" id="31923039"/>
<dbReference type="KEGG" id="car:cauri_0422"/>
<dbReference type="eggNOG" id="COG0093">
    <property type="taxonomic scope" value="Bacteria"/>
</dbReference>
<dbReference type="HOGENOM" id="CLU_095071_2_1_11"/>
<dbReference type="OrthoDB" id="9806379at2"/>
<dbReference type="Proteomes" id="UP000002077">
    <property type="component" value="Chromosome"/>
</dbReference>
<dbReference type="GO" id="GO:0022625">
    <property type="term" value="C:cytosolic large ribosomal subunit"/>
    <property type="evidence" value="ECO:0007669"/>
    <property type="project" value="TreeGrafter"/>
</dbReference>
<dbReference type="GO" id="GO:0070180">
    <property type="term" value="F:large ribosomal subunit rRNA binding"/>
    <property type="evidence" value="ECO:0007669"/>
    <property type="project" value="TreeGrafter"/>
</dbReference>
<dbReference type="GO" id="GO:0003735">
    <property type="term" value="F:structural constituent of ribosome"/>
    <property type="evidence" value="ECO:0007669"/>
    <property type="project" value="InterPro"/>
</dbReference>
<dbReference type="GO" id="GO:0006412">
    <property type="term" value="P:translation"/>
    <property type="evidence" value="ECO:0007669"/>
    <property type="project" value="UniProtKB-UniRule"/>
</dbReference>
<dbReference type="CDD" id="cd00337">
    <property type="entry name" value="Ribosomal_uL14"/>
    <property type="match status" value="1"/>
</dbReference>
<dbReference type="FunFam" id="2.40.150.20:FF:000001">
    <property type="entry name" value="50S ribosomal protein L14"/>
    <property type="match status" value="1"/>
</dbReference>
<dbReference type="Gene3D" id="2.40.150.20">
    <property type="entry name" value="Ribosomal protein L14"/>
    <property type="match status" value="1"/>
</dbReference>
<dbReference type="HAMAP" id="MF_01367">
    <property type="entry name" value="Ribosomal_uL14"/>
    <property type="match status" value="1"/>
</dbReference>
<dbReference type="InterPro" id="IPR000218">
    <property type="entry name" value="Ribosomal_uL14"/>
</dbReference>
<dbReference type="InterPro" id="IPR005745">
    <property type="entry name" value="Ribosomal_uL14_bac-type"/>
</dbReference>
<dbReference type="InterPro" id="IPR019972">
    <property type="entry name" value="Ribosomal_uL14_CS"/>
</dbReference>
<dbReference type="InterPro" id="IPR036853">
    <property type="entry name" value="Ribosomal_uL14_sf"/>
</dbReference>
<dbReference type="NCBIfam" id="TIGR01067">
    <property type="entry name" value="rplN_bact"/>
    <property type="match status" value="1"/>
</dbReference>
<dbReference type="PANTHER" id="PTHR11761">
    <property type="entry name" value="50S/60S RIBOSOMAL PROTEIN L14/L23"/>
    <property type="match status" value="1"/>
</dbReference>
<dbReference type="PANTHER" id="PTHR11761:SF3">
    <property type="entry name" value="LARGE RIBOSOMAL SUBUNIT PROTEIN UL14M"/>
    <property type="match status" value="1"/>
</dbReference>
<dbReference type="Pfam" id="PF00238">
    <property type="entry name" value="Ribosomal_L14"/>
    <property type="match status" value="1"/>
</dbReference>
<dbReference type="SMART" id="SM01374">
    <property type="entry name" value="Ribosomal_L14"/>
    <property type="match status" value="1"/>
</dbReference>
<dbReference type="SUPFAM" id="SSF50193">
    <property type="entry name" value="Ribosomal protein L14"/>
    <property type="match status" value="1"/>
</dbReference>
<dbReference type="PROSITE" id="PS00049">
    <property type="entry name" value="RIBOSOMAL_L14"/>
    <property type="match status" value="1"/>
</dbReference>
<feature type="chain" id="PRO_1000166913" description="Large ribosomal subunit protein uL14">
    <location>
        <begin position="1"/>
        <end position="122"/>
    </location>
</feature>
<protein>
    <recommendedName>
        <fullName evidence="1">Large ribosomal subunit protein uL14</fullName>
    </recommendedName>
    <alternativeName>
        <fullName evidence="2">50S ribosomal protein L14</fullName>
    </alternativeName>
</protein>
<gene>
    <name evidence="1" type="primary">rplN</name>
    <name type="ordered locus">cauri_0422</name>
</gene>
<name>RL14_CORA7</name>
<reference key="1">
    <citation type="journal article" date="2010" name="BMC Genomics">
        <title>Complete genome sequence and lifestyle of black-pigmented Corynebacterium aurimucosum ATCC 700975 (formerly C. nigricans CN-1) isolated from a vaginal swab of a woman with spontaneous abortion.</title>
        <authorList>
            <person name="Trost E."/>
            <person name="Gotker S."/>
            <person name="Schneider J."/>
            <person name="Schneiker-Bekel S."/>
            <person name="Szczepanowski R."/>
            <person name="Tilker A."/>
            <person name="Viehoever P."/>
            <person name="Arnold W."/>
            <person name="Bekel T."/>
            <person name="Blom J."/>
            <person name="Gartemann K.H."/>
            <person name="Linke B."/>
            <person name="Goesmann A."/>
            <person name="Puhler A."/>
            <person name="Shukla S.K."/>
            <person name="Tauch A."/>
        </authorList>
    </citation>
    <scope>NUCLEOTIDE SEQUENCE [LARGE SCALE GENOMIC DNA]</scope>
    <source>
        <strain>ATCC 700975 / DSM 44827 / CIP 107346 / CN-1</strain>
    </source>
</reference>
<accession>C3PL17</accession>
<comment type="function">
    <text evidence="1">Binds to 23S rRNA. Forms part of two intersubunit bridges in the 70S ribosome.</text>
</comment>
<comment type="subunit">
    <text evidence="1">Part of the 50S ribosomal subunit. Forms a cluster with proteins L3 and L19. In the 70S ribosome, L14 and L19 interact and together make contacts with the 16S rRNA in bridges B5 and B8.</text>
</comment>
<comment type="similarity">
    <text evidence="1">Belongs to the universal ribosomal protein uL14 family.</text>
</comment>
<sequence length="122" mass="13324">MIQQESRLRVADNSGARELLVIRVLGGSVRRFAGIGDIVVATVKEAIPGGNVKEGDIVKAVIVRAKKETRRPDGSYIAFDENAAVILKGDNEPRGTRIFGPVARELRDKRFMKIVSLAPEVI</sequence>